<evidence type="ECO:0000255" key="1">
    <source>
        <dbReference type="HAMAP-Rule" id="MF_02114"/>
    </source>
</evidence>
<gene>
    <name evidence="1" type="primary">fbiD</name>
    <name type="ordered locus">SAV_2682</name>
</gene>
<reference key="1">
    <citation type="journal article" date="2001" name="Proc. Natl. Acad. Sci. U.S.A.">
        <title>Genome sequence of an industrial microorganism Streptomyces avermitilis: deducing the ability of producing secondary metabolites.</title>
        <authorList>
            <person name="Omura S."/>
            <person name="Ikeda H."/>
            <person name="Ishikawa J."/>
            <person name="Hanamoto A."/>
            <person name="Takahashi C."/>
            <person name="Shinose M."/>
            <person name="Takahashi Y."/>
            <person name="Horikawa H."/>
            <person name="Nakazawa H."/>
            <person name="Osonoe T."/>
            <person name="Kikuchi H."/>
            <person name="Shiba T."/>
            <person name="Sakaki Y."/>
            <person name="Hattori M."/>
        </authorList>
    </citation>
    <scope>NUCLEOTIDE SEQUENCE [LARGE SCALE GENOMIC DNA]</scope>
    <source>
        <strain>ATCC 31267 / DSM 46492 / JCM 5070 / NBRC 14893 / NCIMB 12804 / NRRL 8165 / MA-4680</strain>
    </source>
</reference>
<reference key="2">
    <citation type="journal article" date="2003" name="Nat. Biotechnol.">
        <title>Complete genome sequence and comparative analysis of the industrial microorganism Streptomyces avermitilis.</title>
        <authorList>
            <person name="Ikeda H."/>
            <person name="Ishikawa J."/>
            <person name="Hanamoto A."/>
            <person name="Shinose M."/>
            <person name="Kikuchi H."/>
            <person name="Shiba T."/>
            <person name="Sakaki Y."/>
            <person name="Hattori M."/>
            <person name="Omura S."/>
        </authorList>
    </citation>
    <scope>NUCLEOTIDE SEQUENCE [LARGE SCALE GENOMIC DNA]</scope>
    <source>
        <strain>ATCC 31267 / DSM 46492 / JCM 5070 / NBRC 14893 / NCIMB 12804 / NRRL 8165 / MA-4680</strain>
    </source>
</reference>
<accession>Q82JS2</accession>
<proteinExistence type="inferred from homology"/>
<comment type="function">
    <text evidence="1">Guanylyltransferase that catalyzes the activation of phosphoenolpyruvate (PEP) as enolpyruvoyl-2-diphospho-5'-guanosine, via the condensation of PEP with GTP. It is involved in the biosynthesis of coenzyme F420, a hydride carrier cofactor.</text>
</comment>
<comment type="catalytic activity">
    <reaction evidence="1">
        <text>phosphoenolpyruvate + GTP + H(+) = enolpyruvoyl-2-diphospho-5'-guanosine + diphosphate</text>
        <dbReference type="Rhea" id="RHEA:30519"/>
        <dbReference type="ChEBI" id="CHEBI:15378"/>
        <dbReference type="ChEBI" id="CHEBI:33019"/>
        <dbReference type="ChEBI" id="CHEBI:37565"/>
        <dbReference type="ChEBI" id="CHEBI:58702"/>
        <dbReference type="ChEBI" id="CHEBI:143701"/>
        <dbReference type="EC" id="2.7.7.105"/>
    </reaction>
</comment>
<comment type="pathway">
    <text evidence="1">Cofactor biosynthesis; coenzyme F420 biosynthesis.</text>
</comment>
<comment type="similarity">
    <text evidence="1">Belongs to the CofC family.</text>
</comment>
<name>FBID_STRAW</name>
<dbReference type="EC" id="2.7.7.105" evidence="1"/>
<dbReference type="EMBL" id="BA000030">
    <property type="protein sequence ID" value="BAC70393.1"/>
    <property type="molecule type" value="Genomic_DNA"/>
</dbReference>
<dbReference type="SMR" id="Q82JS2"/>
<dbReference type="GeneID" id="41539765"/>
<dbReference type="KEGG" id="sma:SAVERM_2682"/>
<dbReference type="eggNOG" id="COG1920">
    <property type="taxonomic scope" value="Bacteria"/>
</dbReference>
<dbReference type="HOGENOM" id="CLU_076569_0_0_11"/>
<dbReference type="OrthoDB" id="9151145at2"/>
<dbReference type="UniPathway" id="UPA00071"/>
<dbReference type="Proteomes" id="UP000000428">
    <property type="component" value="Chromosome"/>
</dbReference>
<dbReference type="GO" id="GO:0005525">
    <property type="term" value="F:GTP binding"/>
    <property type="evidence" value="ECO:0007669"/>
    <property type="project" value="UniProtKB-KW"/>
</dbReference>
<dbReference type="GO" id="GO:0043814">
    <property type="term" value="F:phospholactate guanylyltransferase activity"/>
    <property type="evidence" value="ECO:0007669"/>
    <property type="project" value="InterPro"/>
</dbReference>
<dbReference type="GO" id="GO:0052645">
    <property type="term" value="P:F420-0 metabolic process"/>
    <property type="evidence" value="ECO:0007669"/>
    <property type="project" value="UniProtKB-UniRule"/>
</dbReference>
<dbReference type="Gene3D" id="3.90.550.10">
    <property type="entry name" value="Spore Coat Polysaccharide Biosynthesis Protein SpsA, Chain A"/>
    <property type="match status" value="1"/>
</dbReference>
<dbReference type="HAMAP" id="MF_02114">
    <property type="entry name" value="CofC"/>
    <property type="match status" value="1"/>
</dbReference>
<dbReference type="InterPro" id="IPR002835">
    <property type="entry name" value="CofC"/>
</dbReference>
<dbReference type="InterPro" id="IPR025877">
    <property type="entry name" value="MobA-like_NTP_Trfase"/>
</dbReference>
<dbReference type="InterPro" id="IPR029044">
    <property type="entry name" value="Nucleotide-diphossugar_trans"/>
</dbReference>
<dbReference type="NCBIfam" id="TIGR03552">
    <property type="entry name" value="F420_cofC"/>
    <property type="match status" value="1"/>
</dbReference>
<dbReference type="PANTHER" id="PTHR40392">
    <property type="entry name" value="2-PHOSPHO-L-LACTATE GUANYLYLTRANSFERASE"/>
    <property type="match status" value="1"/>
</dbReference>
<dbReference type="PANTHER" id="PTHR40392:SF1">
    <property type="entry name" value="2-PHOSPHO-L-LACTATE GUANYLYLTRANSFERASE"/>
    <property type="match status" value="1"/>
</dbReference>
<dbReference type="Pfam" id="PF12804">
    <property type="entry name" value="NTP_transf_3"/>
    <property type="match status" value="1"/>
</dbReference>
<dbReference type="SUPFAM" id="SSF53448">
    <property type="entry name" value="Nucleotide-diphospho-sugar transferases"/>
    <property type="match status" value="1"/>
</dbReference>
<protein>
    <recommendedName>
        <fullName evidence="1">Phosphoenolpyruvate guanylyltransferase</fullName>
        <shortName evidence="1">PEP guanylyltransferase</shortName>
        <ecNumber evidence="1">2.7.7.105</ecNumber>
    </recommendedName>
</protein>
<feature type="chain" id="PRO_0000398715" description="Phosphoenolpyruvate guanylyltransferase">
    <location>
        <begin position="1"/>
        <end position="216"/>
    </location>
</feature>
<feature type="binding site" evidence="1">
    <location>
        <position position="139"/>
    </location>
    <ligand>
        <name>phosphoenolpyruvate</name>
        <dbReference type="ChEBI" id="CHEBI:58702"/>
    </ligand>
</feature>
<feature type="binding site" evidence="1">
    <location>
        <position position="155"/>
    </location>
    <ligand>
        <name>phosphoenolpyruvate</name>
        <dbReference type="ChEBI" id="CHEBI:58702"/>
    </ligand>
</feature>
<feature type="binding site" evidence="1">
    <location>
        <position position="158"/>
    </location>
    <ligand>
        <name>phosphoenolpyruvate</name>
        <dbReference type="ChEBI" id="CHEBI:58702"/>
    </ligand>
</feature>
<sequence length="216" mass="21497">MQWTLVVPLKALARAKSRLADTAGDGLRPGLALAFAQDTVAAALASAAVRDVAVVTGDPVAGRELAALGARIVADEPAGGLNAALAHAAAVVRSGRPDSGVAALNADLPALRPAELARVLEAAVEFPRAFLPDAAAIGTTLLAAAPGRELLPAFGTDSRARHRASGAVELGLGGVNSVRQDVDTGADLRAALALGVGPRTAAAAARLLIPGPQGDR</sequence>
<keyword id="KW-0342">GTP-binding</keyword>
<keyword id="KW-0547">Nucleotide-binding</keyword>
<keyword id="KW-0548">Nucleotidyltransferase</keyword>
<keyword id="KW-1185">Reference proteome</keyword>
<keyword id="KW-0808">Transferase</keyword>
<organism>
    <name type="scientific">Streptomyces avermitilis (strain ATCC 31267 / DSM 46492 / JCM 5070 / NBRC 14893 / NCIMB 12804 / NRRL 8165 / MA-4680)</name>
    <dbReference type="NCBI Taxonomy" id="227882"/>
    <lineage>
        <taxon>Bacteria</taxon>
        <taxon>Bacillati</taxon>
        <taxon>Actinomycetota</taxon>
        <taxon>Actinomycetes</taxon>
        <taxon>Kitasatosporales</taxon>
        <taxon>Streptomycetaceae</taxon>
        <taxon>Streptomyces</taxon>
    </lineage>
</organism>